<gene>
    <name evidence="1" type="primary">pyrE</name>
    <name type="ordered locus">Dshi_2372</name>
</gene>
<evidence type="ECO:0000255" key="1">
    <source>
        <dbReference type="HAMAP-Rule" id="MF_01208"/>
    </source>
</evidence>
<feature type="chain" id="PRO_1000085544" description="Orotate phosphoribosyltransferase">
    <location>
        <begin position="1"/>
        <end position="226"/>
    </location>
</feature>
<feature type="binding site" evidence="1">
    <location>
        <position position="107"/>
    </location>
    <ligand>
        <name>5-phospho-alpha-D-ribose 1-diphosphate</name>
        <dbReference type="ChEBI" id="CHEBI:58017"/>
        <note>ligand shared between dimeric partners</note>
    </ligand>
</feature>
<feature type="binding site" description="in other chain" evidence="1">
    <location>
        <position position="108"/>
    </location>
    <ligand>
        <name>5-phospho-alpha-D-ribose 1-diphosphate</name>
        <dbReference type="ChEBI" id="CHEBI:58017"/>
        <note>ligand shared between dimeric partners</note>
    </ligand>
</feature>
<feature type="binding site" evidence="1">
    <location>
        <position position="111"/>
    </location>
    <ligand>
        <name>5-phospho-alpha-D-ribose 1-diphosphate</name>
        <dbReference type="ChEBI" id="CHEBI:58017"/>
        <note>ligand shared between dimeric partners</note>
    </ligand>
</feature>
<feature type="binding site" description="in other chain" evidence="1">
    <location>
        <begin position="133"/>
        <end position="141"/>
    </location>
    <ligand>
        <name>5-phospho-alpha-D-ribose 1-diphosphate</name>
        <dbReference type="ChEBI" id="CHEBI:58017"/>
        <note>ligand shared between dimeric partners</note>
    </ligand>
</feature>
<feature type="binding site" evidence="1">
    <location>
        <position position="137"/>
    </location>
    <ligand>
        <name>orotate</name>
        <dbReference type="ChEBI" id="CHEBI:30839"/>
    </ligand>
</feature>
<accession>A8LRS7</accession>
<comment type="function">
    <text evidence="1">Catalyzes the transfer of a ribosyl phosphate group from 5-phosphoribose 1-diphosphate to orotate, leading to the formation of orotidine monophosphate (OMP).</text>
</comment>
<comment type="catalytic activity">
    <reaction evidence="1">
        <text>orotidine 5'-phosphate + diphosphate = orotate + 5-phospho-alpha-D-ribose 1-diphosphate</text>
        <dbReference type="Rhea" id="RHEA:10380"/>
        <dbReference type="ChEBI" id="CHEBI:30839"/>
        <dbReference type="ChEBI" id="CHEBI:33019"/>
        <dbReference type="ChEBI" id="CHEBI:57538"/>
        <dbReference type="ChEBI" id="CHEBI:58017"/>
        <dbReference type="EC" id="2.4.2.10"/>
    </reaction>
</comment>
<comment type="cofactor">
    <cofactor evidence="1">
        <name>Mg(2+)</name>
        <dbReference type="ChEBI" id="CHEBI:18420"/>
    </cofactor>
</comment>
<comment type="pathway">
    <text evidence="1">Pyrimidine metabolism; UMP biosynthesis via de novo pathway; UMP from orotate: step 1/2.</text>
</comment>
<comment type="subunit">
    <text evidence="1">Homodimer.</text>
</comment>
<comment type="similarity">
    <text evidence="1">Belongs to the purine/pyrimidine phosphoribosyltransferase family. PyrE subfamily.</text>
</comment>
<protein>
    <recommendedName>
        <fullName evidence="1">Orotate phosphoribosyltransferase</fullName>
        <shortName evidence="1">OPRT</shortName>
        <shortName evidence="1">OPRTase</shortName>
        <ecNumber evidence="1">2.4.2.10</ecNumber>
    </recommendedName>
</protein>
<dbReference type="EC" id="2.4.2.10" evidence="1"/>
<dbReference type="EMBL" id="CP000830">
    <property type="protein sequence ID" value="ABV94108.1"/>
    <property type="molecule type" value="Genomic_DNA"/>
</dbReference>
<dbReference type="RefSeq" id="WP_012179039.1">
    <property type="nucleotide sequence ID" value="NC_009952.1"/>
</dbReference>
<dbReference type="SMR" id="A8LRS7"/>
<dbReference type="STRING" id="398580.Dshi_2372"/>
<dbReference type="KEGG" id="dsh:Dshi_2372"/>
<dbReference type="eggNOG" id="COG0461">
    <property type="taxonomic scope" value="Bacteria"/>
</dbReference>
<dbReference type="HOGENOM" id="CLU_074878_1_0_5"/>
<dbReference type="OrthoDB" id="9802134at2"/>
<dbReference type="UniPathway" id="UPA00070">
    <property type="reaction ID" value="UER00119"/>
</dbReference>
<dbReference type="Proteomes" id="UP000006833">
    <property type="component" value="Chromosome"/>
</dbReference>
<dbReference type="GO" id="GO:0000287">
    <property type="term" value="F:magnesium ion binding"/>
    <property type="evidence" value="ECO:0007669"/>
    <property type="project" value="UniProtKB-UniRule"/>
</dbReference>
<dbReference type="GO" id="GO:0004588">
    <property type="term" value="F:orotate phosphoribosyltransferase activity"/>
    <property type="evidence" value="ECO:0007669"/>
    <property type="project" value="UniProtKB-UniRule"/>
</dbReference>
<dbReference type="GO" id="GO:0044205">
    <property type="term" value="P:'de novo' UMP biosynthetic process"/>
    <property type="evidence" value="ECO:0007669"/>
    <property type="project" value="UniProtKB-UniRule"/>
</dbReference>
<dbReference type="GO" id="GO:0019856">
    <property type="term" value="P:pyrimidine nucleobase biosynthetic process"/>
    <property type="evidence" value="ECO:0007669"/>
    <property type="project" value="TreeGrafter"/>
</dbReference>
<dbReference type="CDD" id="cd06223">
    <property type="entry name" value="PRTases_typeI"/>
    <property type="match status" value="1"/>
</dbReference>
<dbReference type="Gene3D" id="3.40.50.2020">
    <property type="match status" value="1"/>
</dbReference>
<dbReference type="HAMAP" id="MF_01208">
    <property type="entry name" value="PyrE"/>
    <property type="match status" value="1"/>
</dbReference>
<dbReference type="InterPro" id="IPR023031">
    <property type="entry name" value="OPRT"/>
</dbReference>
<dbReference type="InterPro" id="IPR004467">
    <property type="entry name" value="Or_phspho_trans_dom"/>
</dbReference>
<dbReference type="InterPro" id="IPR000836">
    <property type="entry name" value="PRibTrfase_dom"/>
</dbReference>
<dbReference type="InterPro" id="IPR029057">
    <property type="entry name" value="PRTase-like"/>
</dbReference>
<dbReference type="NCBIfam" id="NF001729">
    <property type="entry name" value="PRK00455.1-3"/>
    <property type="match status" value="1"/>
</dbReference>
<dbReference type="NCBIfam" id="TIGR00336">
    <property type="entry name" value="pyrE"/>
    <property type="match status" value="1"/>
</dbReference>
<dbReference type="PANTHER" id="PTHR19278">
    <property type="entry name" value="OROTATE PHOSPHORIBOSYLTRANSFERASE"/>
    <property type="match status" value="1"/>
</dbReference>
<dbReference type="PANTHER" id="PTHR19278:SF9">
    <property type="entry name" value="URIDINE 5'-MONOPHOSPHATE SYNTHASE"/>
    <property type="match status" value="1"/>
</dbReference>
<dbReference type="Pfam" id="PF00156">
    <property type="entry name" value="Pribosyltran"/>
    <property type="match status" value="1"/>
</dbReference>
<dbReference type="SUPFAM" id="SSF53271">
    <property type="entry name" value="PRTase-like"/>
    <property type="match status" value="1"/>
</dbReference>
<keyword id="KW-0328">Glycosyltransferase</keyword>
<keyword id="KW-0460">Magnesium</keyword>
<keyword id="KW-0665">Pyrimidine biosynthesis</keyword>
<keyword id="KW-1185">Reference proteome</keyword>
<keyword id="KW-0808">Transferase</keyword>
<name>PYRE_DINSH</name>
<reference key="1">
    <citation type="journal article" date="2010" name="ISME J.">
        <title>The complete genome sequence of the algal symbiont Dinoroseobacter shibae: a hitchhiker's guide to life in the sea.</title>
        <authorList>
            <person name="Wagner-Dobler I."/>
            <person name="Ballhausen B."/>
            <person name="Berger M."/>
            <person name="Brinkhoff T."/>
            <person name="Buchholz I."/>
            <person name="Bunk B."/>
            <person name="Cypionka H."/>
            <person name="Daniel R."/>
            <person name="Drepper T."/>
            <person name="Gerdts G."/>
            <person name="Hahnke S."/>
            <person name="Han C."/>
            <person name="Jahn D."/>
            <person name="Kalhoefer D."/>
            <person name="Kiss H."/>
            <person name="Klenk H.P."/>
            <person name="Kyrpides N."/>
            <person name="Liebl W."/>
            <person name="Liesegang H."/>
            <person name="Meincke L."/>
            <person name="Pati A."/>
            <person name="Petersen J."/>
            <person name="Piekarski T."/>
            <person name="Pommerenke C."/>
            <person name="Pradella S."/>
            <person name="Pukall R."/>
            <person name="Rabus R."/>
            <person name="Stackebrandt E."/>
            <person name="Thole S."/>
            <person name="Thompson L."/>
            <person name="Tielen P."/>
            <person name="Tomasch J."/>
            <person name="von Jan M."/>
            <person name="Wanphrut N."/>
            <person name="Wichels A."/>
            <person name="Zech H."/>
            <person name="Simon M."/>
        </authorList>
    </citation>
    <scope>NUCLEOTIDE SEQUENCE [LARGE SCALE GENOMIC DNA]</scope>
    <source>
        <strain>DSM 16493 / NCIMB 14021 / DFL 12</strain>
    </source>
</reference>
<proteinExistence type="inferred from homology"/>
<sequence length="226" mass="24936">MIPNSFPDQAEMARLTAGMLLEIEAVHFNAREPFILASGLPSPTYIDCRKLISFPRIRSTLMDFLTVTVMREAGFEAFDNIAGGETAGIPFGALVAERLALPMTYVRKKPKGYGRDAQIEGVMREGERVLLVEDLTTDGGSKLKFVEAIRKTGATCGHTAVIFSYGIFPETESSLAAEGVKLHHLCTWWDVLAEARARGSFDPETLGAVETFLNDPRAWQEAHKRD</sequence>
<organism>
    <name type="scientific">Dinoroseobacter shibae (strain DSM 16493 / NCIMB 14021 / DFL 12)</name>
    <dbReference type="NCBI Taxonomy" id="398580"/>
    <lineage>
        <taxon>Bacteria</taxon>
        <taxon>Pseudomonadati</taxon>
        <taxon>Pseudomonadota</taxon>
        <taxon>Alphaproteobacteria</taxon>
        <taxon>Rhodobacterales</taxon>
        <taxon>Roseobacteraceae</taxon>
        <taxon>Dinoroseobacter</taxon>
    </lineage>
</organism>